<proteinExistence type="evidence at protein level"/>
<sequence length="399" mass="43142">MGSMAQKSVLMLCGEFMEAYETIVPLYVLQAFGVSVHCVSPGRKTGDKCVMAAHDLLGLEIYTELVVDHLTLNANFDGVIPDQYDAIIIPGGRFTELLSADEKCVSLVARFAELKKLIFTSCHSQLFLAAAGLLTGGMKCTAFESMKPFIELSGGAWWQQPGVQTLFEITDCVKDGSFMSTMGWPTLGHSLKVLLESLGSKISSSKENHQTSLLFLIGDCVEDYSINVPFKAFQALGCKVDAVTPTKKRGEKCATIVHDLEDGRQLPTEKFGHNFYVTVAWDDVSVDDYDCIVVPGGRSPELLVMNPKAVELVRKFVEKGKFVAAIGMGNWLLAATGALKKKRCASSYGTKVAVKVAGGEIVESERCVTDDKLVTAASTSDLPAFLYALSTALGLSVVF</sequence>
<organism>
    <name type="scientific">Arabidopsis thaliana</name>
    <name type="common">Mouse-ear cress</name>
    <dbReference type="NCBI Taxonomy" id="3702"/>
    <lineage>
        <taxon>Eukaryota</taxon>
        <taxon>Viridiplantae</taxon>
        <taxon>Streptophyta</taxon>
        <taxon>Embryophyta</taxon>
        <taxon>Tracheophyta</taxon>
        <taxon>Spermatophyta</taxon>
        <taxon>Magnoliopsida</taxon>
        <taxon>eudicotyledons</taxon>
        <taxon>Gunneridae</taxon>
        <taxon>Pentapetalae</taxon>
        <taxon>rosids</taxon>
        <taxon>malvids</taxon>
        <taxon>Brassicales</taxon>
        <taxon>Brassicaceae</taxon>
        <taxon>Camelineae</taxon>
        <taxon>Arabidopsis</taxon>
    </lineage>
</organism>
<evidence type="ECO:0000250" key="1"/>
<evidence type="ECO:0000305" key="2"/>
<evidence type="ECO:0000305" key="3">
    <source>
    </source>
</evidence>
<dbReference type="EMBL" id="AL138656">
    <property type="protein sequence ID" value="CAB77580.1"/>
    <property type="molecule type" value="Genomic_DNA"/>
</dbReference>
<dbReference type="EMBL" id="CP002686">
    <property type="protein sequence ID" value="AEE79254.1"/>
    <property type="molecule type" value="Genomic_DNA"/>
</dbReference>
<dbReference type="EMBL" id="AY099583">
    <property type="protein sequence ID" value="AAM20435.1"/>
    <property type="molecule type" value="mRNA"/>
</dbReference>
<dbReference type="EMBL" id="BT008488">
    <property type="protein sequence ID" value="AAP37847.1"/>
    <property type="molecule type" value="mRNA"/>
</dbReference>
<dbReference type="PIR" id="T47619">
    <property type="entry name" value="T47619"/>
</dbReference>
<dbReference type="RefSeq" id="NP_191023.1">
    <property type="nucleotide sequence ID" value="NM_115317.6"/>
</dbReference>
<dbReference type="SMR" id="Q9M1G8"/>
<dbReference type="FunCoup" id="Q9M1G8">
    <property type="interactions" value="346"/>
</dbReference>
<dbReference type="STRING" id="3702.Q9M1G8"/>
<dbReference type="MEROPS" id="C56.A02"/>
<dbReference type="GlyGen" id="Q9M1G8">
    <property type="glycosylation" value="1 site"/>
</dbReference>
<dbReference type="PaxDb" id="3702-AT3G54600.1"/>
<dbReference type="ProteomicsDB" id="224063"/>
<dbReference type="EnsemblPlants" id="AT3G54600.1">
    <property type="protein sequence ID" value="AT3G54600.1"/>
    <property type="gene ID" value="AT3G54600"/>
</dbReference>
<dbReference type="GeneID" id="824625"/>
<dbReference type="Gramene" id="AT3G54600.1">
    <property type="protein sequence ID" value="AT3G54600.1"/>
    <property type="gene ID" value="AT3G54600"/>
</dbReference>
<dbReference type="KEGG" id="ath:AT3G54600"/>
<dbReference type="Araport" id="AT3G54600"/>
<dbReference type="TAIR" id="AT3G54600">
    <property type="gene designation" value="DJ1F"/>
</dbReference>
<dbReference type="eggNOG" id="KOG2764">
    <property type="taxonomic scope" value="Eukaryota"/>
</dbReference>
<dbReference type="HOGENOM" id="CLU_000445_44_3_1"/>
<dbReference type="InParanoid" id="Q9M1G8"/>
<dbReference type="OMA" id="WWQQPGV"/>
<dbReference type="PhylomeDB" id="Q9M1G8"/>
<dbReference type="BRENDA" id="4.2.1.130">
    <property type="organism ID" value="399"/>
</dbReference>
<dbReference type="PRO" id="PR:Q9M1G8"/>
<dbReference type="Proteomes" id="UP000006548">
    <property type="component" value="Chromosome 3"/>
</dbReference>
<dbReference type="ExpressionAtlas" id="Q9M1G8">
    <property type="expression patterns" value="baseline and differential"/>
</dbReference>
<dbReference type="GO" id="GO:0005829">
    <property type="term" value="C:cytosol"/>
    <property type="evidence" value="ECO:0007005"/>
    <property type="project" value="TAIR"/>
</dbReference>
<dbReference type="CDD" id="cd03169">
    <property type="entry name" value="GATase1_PfpI_1"/>
    <property type="match status" value="2"/>
</dbReference>
<dbReference type="Gene3D" id="3.40.50.880">
    <property type="match status" value="2"/>
</dbReference>
<dbReference type="InterPro" id="IPR006286">
    <property type="entry name" value="C56_PfpI-like"/>
</dbReference>
<dbReference type="InterPro" id="IPR029062">
    <property type="entry name" value="Class_I_gatase-like"/>
</dbReference>
<dbReference type="InterPro" id="IPR002818">
    <property type="entry name" value="DJ-1/PfpI"/>
</dbReference>
<dbReference type="PANTHER" id="PTHR42733">
    <property type="entry name" value="DJ-1 PROTEIN"/>
    <property type="match status" value="1"/>
</dbReference>
<dbReference type="PANTHER" id="PTHR42733:SF8">
    <property type="entry name" value="DJ-1 PROTEIN HOMOLOG F"/>
    <property type="match status" value="1"/>
</dbReference>
<dbReference type="Pfam" id="PF01965">
    <property type="entry name" value="DJ-1_PfpI"/>
    <property type="match status" value="2"/>
</dbReference>
<dbReference type="SUPFAM" id="SSF52317">
    <property type="entry name" value="Class I glutamine amidotransferase-like"/>
    <property type="match status" value="2"/>
</dbReference>
<accession>Q9M1G8</accession>
<comment type="function">
    <text evidence="1">May be involved in oxidative stress response.</text>
</comment>
<comment type="subunit">
    <text evidence="3">Homotrimer.</text>
</comment>
<comment type="similarity">
    <text evidence="2">Belongs to the peptidase C56 family.</text>
</comment>
<protein>
    <recommendedName>
        <fullName>DJ-1 protein homolog F</fullName>
        <shortName>AtDJ-1F</shortName>
    </recommendedName>
</protein>
<keyword id="KW-1185">Reference proteome</keyword>
<keyword id="KW-0677">Repeat</keyword>
<keyword id="KW-0346">Stress response</keyword>
<name>DJ1F_ARATH</name>
<reference key="1">
    <citation type="journal article" date="2000" name="Nature">
        <title>Sequence and analysis of chromosome 3 of the plant Arabidopsis thaliana.</title>
        <authorList>
            <person name="Salanoubat M."/>
            <person name="Lemcke K."/>
            <person name="Rieger M."/>
            <person name="Ansorge W."/>
            <person name="Unseld M."/>
            <person name="Fartmann B."/>
            <person name="Valle G."/>
            <person name="Bloecker H."/>
            <person name="Perez-Alonso M."/>
            <person name="Obermaier B."/>
            <person name="Delseny M."/>
            <person name="Boutry M."/>
            <person name="Grivell L.A."/>
            <person name="Mache R."/>
            <person name="Puigdomenech P."/>
            <person name="De Simone V."/>
            <person name="Choisne N."/>
            <person name="Artiguenave F."/>
            <person name="Robert C."/>
            <person name="Brottier P."/>
            <person name="Wincker P."/>
            <person name="Cattolico L."/>
            <person name="Weissenbach J."/>
            <person name="Saurin W."/>
            <person name="Quetier F."/>
            <person name="Schaefer M."/>
            <person name="Mueller-Auer S."/>
            <person name="Gabel C."/>
            <person name="Fuchs M."/>
            <person name="Benes V."/>
            <person name="Wurmbach E."/>
            <person name="Drzonek H."/>
            <person name="Erfle H."/>
            <person name="Jordan N."/>
            <person name="Bangert S."/>
            <person name="Wiedelmann R."/>
            <person name="Kranz H."/>
            <person name="Voss H."/>
            <person name="Holland R."/>
            <person name="Brandt P."/>
            <person name="Nyakatura G."/>
            <person name="Vezzi A."/>
            <person name="D'Angelo M."/>
            <person name="Pallavicini A."/>
            <person name="Toppo S."/>
            <person name="Simionati B."/>
            <person name="Conrad A."/>
            <person name="Hornischer K."/>
            <person name="Kauer G."/>
            <person name="Loehnert T.-H."/>
            <person name="Nordsiek G."/>
            <person name="Reichelt J."/>
            <person name="Scharfe M."/>
            <person name="Schoen O."/>
            <person name="Bargues M."/>
            <person name="Terol J."/>
            <person name="Climent J."/>
            <person name="Navarro P."/>
            <person name="Collado C."/>
            <person name="Perez-Perez A."/>
            <person name="Ottenwaelder B."/>
            <person name="Duchemin D."/>
            <person name="Cooke R."/>
            <person name="Laudie M."/>
            <person name="Berger-Llauro C."/>
            <person name="Purnelle B."/>
            <person name="Masuy D."/>
            <person name="de Haan M."/>
            <person name="Maarse A.C."/>
            <person name="Alcaraz J.-P."/>
            <person name="Cottet A."/>
            <person name="Casacuberta E."/>
            <person name="Monfort A."/>
            <person name="Argiriou A."/>
            <person name="Flores M."/>
            <person name="Liguori R."/>
            <person name="Vitale D."/>
            <person name="Mannhaupt G."/>
            <person name="Haase D."/>
            <person name="Schoof H."/>
            <person name="Rudd S."/>
            <person name="Zaccaria P."/>
            <person name="Mewes H.-W."/>
            <person name="Mayer K.F.X."/>
            <person name="Kaul S."/>
            <person name="Town C.D."/>
            <person name="Koo H.L."/>
            <person name="Tallon L.J."/>
            <person name="Jenkins J."/>
            <person name="Rooney T."/>
            <person name="Rizzo M."/>
            <person name="Walts A."/>
            <person name="Utterback T."/>
            <person name="Fujii C.Y."/>
            <person name="Shea T.P."/>
            <person name="Creasy T.H."/>
            <person name="Haas B."/>
            <person name="Maiti R."/>
            <person name="Wu D."/>
            <person name="Peterson J."/>
            <person name="Van Aken S."/>
            <person name="Pai G."/>
            <person name="Militscher J."/>
            <person name="Sellers P."/>
            <person name="Gill J.E."/>
            <person name="Feldblyum T.V."/>
            <person name="Preuss D."/>
            <person name="Lin X."/>
            <person name="Nierman W.C."/>
            <person name="Salzberg S.L."/>
            <person name="White O."/>
            <person name="Venter J.C."/>
            <person name="Fraser C.M."/>
            <person name="Kaneko T."/>
            <person name="Nakamura Y."/>
            <person name="Sato S."/>
            <person name="Kato T."/>
            <person name="Asamizu E."/>
            <person name="Sasamoto S."/>
            <person name="Kimura T."/>
            <person name="Idesawa K."/>
            <person name="Kawashima K."/>
            <person name="Kishida Y."/>
            <person name="Kiyokawa C."/>
            <person name="Kohara M."/>
            <person name="Matsumoto M."/>
            <person name="Matsuno A."/>
            <person name="Muraki A."/>
            <person name="Nakayama S."/>
            <person name="Nakazaki N."/>
            <person name="Shinpo S."/>
            <person name="Takeuchi C."/>
            <person name="Wada T."/>
            <person name="Watanabe A."/>
            <person name="Yamada M."/>
            <person name="Yasuda M."/>
            <person name="Tabata S."/>
        </authorList>
    </citation>
    <scope>NUCLEOTIDE SEQUENCE [LARGE SCALE GENOMIC DNA]</scope>
    <source>
        <strain>cv. Columbia</strain>
    </source>
</reference>
<reference key="2">
    <citation type="journal article" date="2017" name="Plant J.">
        <title>Araport11: a complete reannotation of the Arabidopsis thaliana reference genome.</title>
        <authorList>
            <person name="Cheng C.Y."/>
            <person name="Krishnakumar V."/>
            <person name="Chan A.P."/>
            <person name="Thibaud-Nissen F."/>
            <person name="Schobel S."/>
            <person name="Town C.D."/>
        </authorList>
    </citation>
    <scope>GENOME REANNOTATION</scope>
    <source>
        <strain>cv. Columbia</strain>
    </source>
</reference>
<reference key="3">
    <citation type="journal article" date="2003" name="Science">
        <title>Empirical analysis of transcriptional activity in the Arabidopsis genome.</title>
        <authorList>
            <person name="Yamada K."/>
            <person name="Lim J."/>
            <person name="Dale J.M."/>
            <person name="Chen H."/>
            <person name="Shinn P."/>
            <person name="Palm C.J."/>
            <person name="Southwick A.M."/>
            <person name="Wu H.C."/>
            <person name="Kim C.J."/>
            <person name="Nguyen M."/>
            <person name="Pham P.K."/>
            <person name="Cheuk R.F."/>
            <person name="Karlin-Newmann G."/>
            <person name="Liu S.X."/>
            <person name="Lam B."/>
            <person name="Sakano H."/>
            <person name="Wu T."/>
            <person name="Yu G."/>
            <person name="Miranda M."/>
            <person name="Quach H.L."/>
            <person name="Tripp M."/>
            <person name="Chang C.H."/>
            <person name="Lee J.M."/>
            <person name="Toriumi M.J."/>
            <person name="Chan M.M."/>
            <person name="Tang C.C."/>
            <person name="Onodera C.S."/>
            <person name="Deng J.M."/>
            <person name="Akiyama K."/>
            <person name="Ansari Y."/>
            <person name="Arakawa T."/>
            <person name="Banh J."/>
            <person name="Banno F."/>
            <person name="Bowser L."/>
            <person name="Brooks S.Y."/>
            <person name="Carninci P."/>
            <person name="Chao Q."/>
            <person name="Choy N."/>
            <person name="Enju A."/>
            <person name="Goldsmith A.D."/>
            <person name="Gurjal M."/>
            <person name="Hansen N.F."/>
            <person name="Hayashizaki Y."/>
            <person name="Johnson-Hopson C."/>
            <person name="Hsuan V.W."/>
            <person name="Iida K."/>
            <person name="Karnes M."/>
            <person name="Khan S."/>
            <person name="Koesema E."/>
            <person name="Ishida J."/>
            <person name="Jiang P.X."/>
            <person name="Jones T."/>
            <person name="Kawai J."/>
            <person name="Kamiya A."/>
            <person name="Meyers C."/>
            <person name="Nakajima M."/>
            <person name="Narusaka M."/>
            <person name="Seki M."/>
            <person name="Sakurai T."/>
            <person name="Satou M."/>
            <person name="Tamse R."/>
            <person name="Vaysberg M."/>
            <person name="Wallender E.K."/>
            <person name="Wong C."/>
            <person name="Yamamura Y."/>
            <person name="Yuan S."/>
            <person name="Shinozaki K."/>
            <person name="Davis R.W."/>
            <person name="Theologis A."/>
            <person name="Ecker J.R."/>
        </authorList>
    </citation>
    <scope>NUCLEOTIDE SEQUENCE [LARGE SCALE MRNA]</scope>
    <source>
        <strain>cv. Columbia</strain>
    </source>
</reference>
<reference key="4">
    <citation type="journal article" date="2013" name="FEBS J.">
        <title>Novel glyoxalases from Arabidopsis thaliana.</title>
        <authorList>
            <person name="Kwon K."/>
            <person name="Choi D."/>
            <person name="Hyun J.K."/>
            <person name="Jung H.S."/>
            <person name="Baek K."/>
            <person name="Park C."/>
        </authorList>
    </citation>
    <scope>SUBUNIT</scope>
</reference>
<feature type="chain" id="PRO_0000424708" description="DJ-1 protein homolog F">
    <location>
        <begin position="1"/>
        <end position="399"/>
    </location>
</feature>
<feature type="domain" description="PfpI endopeptidase 1">
    <location>
        <begin position="7"/>
        <end position="199"/>
    </location>
</feature>
<feature type="domain" description="PfpI endopeptidase 2">
    <location>
        <begin position="211"/>
        <end position="394"/>
    </location>
</feature>
<gene>
    <name type="primary">DJ1F</name>
    <name type="ordered locus">At3g54600</name>
    <name type="ORF">T14E10.170</name>
</gene>